<feature type="signal peptide" evidence="2">
    <location>
        <begin position="1"/>
        <end position="19"/>
    </location>
</feature>
<feature type="chain" id="PRO_0000394569" description="Probable pectate lyase C">
    <location>
        <begin position="20"/>
        <end position="419"/>
    </location>
</feature>
<feature type="domain" description="EF-hand">
    <location>
        <begin position="261"/>
        <end position="296"/>
    </location>
</feature>
<feature type="region of interest" description="Disordered" evidence="4">
    <location>
        <begin position="350"/>
        <end position="395"/>
    </location>
</feature>
<feature type="compositionally biased region" description="Low complexity" evidence="4">
    <location>
        <begin position="363"/>
        <end position="372"/>
    </location>
</feature>
<feature type="compositionally biased region" description="Acidic residues" evidence="4">
    <location>
        <begin position="373"/>
        <end position="386"/>
    </location>
</feature>
<feature type="active site" evidence="2">
    <location>
        <position position="204"/>
    </location>
</feature>
<feature type="binding site" evidence="3">
    <location>
        <position position="274"/>
    </location>
    <ligand>
        <name>Ca(2+)</name>
        <dbReference type="ChEBI" id="CHEBI:29108"/>
    </ligand>
</feature>
<feature type="binding site" evidence="3">
    <location>
        <position position="276"/>
    </location>
    <ligand>
        <name>Ca(2+)</name>
        <dbReference type="ChEBI" id="CHEBI:29108"/>
    </ligand>
</feature>
<feature type="binding site" evidence="3">
    <location>
        <position position="278"/>
    </location>
    <ligand>
        <name>Ca(2+)</name>
        <dbReference type="ChEBI" id="CHEBI:29108"/>
    </ligand>
</feature>
<feature type="binding site" evidence="3">
    <location>
        <position position="280"/>
    </location>
    <ligand>
        <name>Ca(2+)</name>
        <dbReference type="ChEBI" id="CHEBI:29108"/>
    </ligand>
</feature>
<feature type="binding site" evidence="3">
    <location>
        <position position="285"/>
    </location>
    <ligand>
        <name>Ca(2+)</name>
        <dbReference type="ChEBI" id="CHEBI:29108"/>
    </ligand>
</feature>
<feature type="glycosylation site" description="N-linked (GlcNAc...) asparagine" evidence="2">
    <location>
        <position position="48"/>
    </location>
</feature>
<feature type="glycosylation site" description="N-linked (GlcNAc...) asparagine" evidence="2">
    <location>
        <position position="164"/>
    </location>
</feature>
<feature type="glycosylation site" description="N-linked (GlcNAc...) asparagine" evidence="2">
    <location>
        <position position="201"/>
    </location>
</feature>
<feature type="glycosylation site" description="N-linked (GlcNAc...) asparagine" evidence="2">
    <location>
        <position position="282"/>
    </location>
</feature>
<protein>
    <recommendedName>
        <fullName>Probable pectate lyase C</fullName>
        <ecNumber>4.2.2.2</ecNumber>
    </recommendedName>
</protein>
<sequence>MRLTPSLISCLSLLHFTSALVAFPGAEGFGANAVGGRQGEVYVVSNLNDSGEGSLRDAVSQPGRIVVFSVGGVIEITDRIVVSKQVTILGQTAPGDGITVYGNGWSFSNADDAIVRYIRIRMGKGGSSGKDAMGIADGKNMIFDHVSVSWGRDETFSINGDVSNVTIQNSIIAQGLETHSCGGLMQTDGGVSLFRNLYIDNKTRNPKVKGVNEFTNNVIYNWGGGGGYIAGGSDGESNVNVIGNYFISGPDTSVTAFTRGNENFHAYVETNYYDSDKDGTLNGSELGVDSTNYGGMDLVTEKYDYPAVASVLSPDDALTYVTKYAGASKVRDSVDTQLVAQVESYGKDGALISDEADMGGAGDLDQGTTPTDTDGDGIPDDAEAELGTDPNTADSMDLDTSGYTFLEVWANSLVPSSYA</sequence>
<accession>B8NQQ7</accession>
<comment type="function">
    <text evidence="1">Pectinolytic enzyme consist of four classes of enzymes: pectin lyase, polygalacturonase, pectin methylesterase and rhamnogalacturonase. Among pectinolytic enzymes, pectin lyase is the most important in depolymerization of pectin, since it cleaves internal glycosidic bonds of highly methylated pectins. Favors pectate, the anion, over pectin, the methyl ester (By similarity).</text>
</comment>
<comment type="catalytic activity">
    <reaction>
        <text>Eliminative cleavage of (1-&gt;4)-alpha-D-galacturonan to give oligosaccharides with 4-deoxy-alpha-D-galact-4-enuronosyl groups at their non-reducing ends.</text>
        <dbReference type="EC" id="4.2.2.2"/>
    </reaction>
</comment>
<comment type="cofactor">
    <cofactor evidence="1">
        <name>Ca(2+)</name>
        <dbReference type="ChEBI" id="CHEBI:29108"/>
    </cofactor>
    <text evidence="1">Binds 1 Ca(2+) ion per subunit.</text>
</comment>
<comment type="subcellular location">
    <subcellularLocation>
        <location evidence="1">Secreted</location>
    </subcellularLocation>
</comment>
<comment type="similarity">
    <text evidence="5">Belongs to the polysaccharide lyase 1 family.</text>
</comment>
<evidence type="ECO:0000250" key="1"/>
<evidence type="ECO:0000255" key="2"/>
<evidence type="ECO:0000255" key="3">
    <source>
        <dbReference type="PROSITE-ProRule" id="PRU10142"/>
    </source>
</evidence>
<evidence type="ECO:0000256" key="4">
    <source>
        <dbReference type="SAM" id="MobiDB-lite"/>
    </source>
</evidence>
<evidence type="ECO:0000305" key="5"/>
<keyword id="KW-0106">Calcium</keyword>
<keyword id="KW-0119">Carbohydrate metabolism</keyword>
<keyword id="KW-0961">Cell wall biogenesis/degradation</keyword>
<keyword id="KW-0325">Glycoprotein</keyword>
<keyword id="KW-0456">Lyase</keyword>
<keyword id="KW-0479">Metal-binding</keyword>
<keyword id="KW-0624">Polysaccharide degradation</keyword>
<keyword id="KW-0964">Secreted</keyword>
<keyword id="KW-0732">Signal</keyword>
<proteinExistence type="inferred from homology"/>
<dbReference type="EC" id="4.2.2.2"/>
<dbReference type="EMBL" id="EQ963482">
    <property type="protein sequence ID" value="EED47560.1"/>
    <property type="molecule type" value="Genomic_DNA"/>
</dbReference>
<dbReference type="RefSeq" id="XP_002382402.1">
    <property type="nucleotide sequence ID" value="XM_002382361.1"/>
</dbReference>
<dbReference type="SMR" id="B8NQQ7"/>
<dbReference type="GlyCosmos" id="B8NQQ7">
    <property type="glycosylation" value="4 sites, No reported glycans"/>
</dbReference>
<dbReference type="EnsemblFungi" id="EED47560">
    <property type="protein sequence ID" value="EED47560"/>
    <property type="gene ID" value="AFLA_002010"/>
</dbReference>
<dbReference type="VEuPathDB" id="FungiDB:AFLA_011525"/>
<dbReference type="eggNOG" id="ENOG502QW7I">
    <property type="taxonomic scope" value="Eukaryota"/>
</dbReference>
<dbReference type="HOGENOM" id="CLU_016764_1_1_1"/>
<dbReference type="OMA" id="GIHSMGT"/>
<dbReference type="GO" id="GO:0005576">
    <property type="term" value="C:extracellular region"/>
    <property type="evidence" value="ECO:0007669"/>
    <property type="project" value="UniProtKB-SubCell"/>
</dbReference>
<dbReference type="GO" id="GO:0046872">
    <property type="term" value="F:metal ion binding"/>
    <property type="evidence" value="ECO:0007669"/>
    <property type="project" value="UniProtKB-KW"/>
</dbReference>
<dbReference type="GO" id="GO:0030570">
    <property type="term" value="F:pectate lyase activity"/>
    <property type="evidence" value="ECO:0007669"/>
    <property type="project" value="UniProtKB-EC"/>
</dbReference>
<dbReference type="GO" id="GO:0071555">
    <property type="term" value="P:cell wall organization"/>
    <property type="evidence" value="ECO:0007669"/>
    <property type="project" value="UniProtKB-KW"/>
</dbReference>
<dbReference type="GO" id="GO:0000272">
    <property type="term" value="P:polysaccharide catabolic process"/>
    <property type="evidence" value="ECO:0007669"/>
    <property type="project" value="UniProtKB-KW"/>
</dbReference>
<dbReference type="Gene3D" id="2.160.20.10">
    <property type="entry name" value="Single-stranded right-handed beta-helix, Pectin lyase-like"/>
    <property type="match status" value="1"/>
</dbReference>
<dbReference type="InterPro" id="IPR018247">
    <property type="entry name" value="EF_Hand_1_Ca_BS"/>
</dbReference>
<dbReference type="InterPro" id="IPR012334">
    <property type="entry name" value="Pectin_lyas_fold"/>
</dbReference>
<dbReference type="InterPro" id="IPR011050">
    <property type="entry name" value="Pectin_lyase_fold/virulence"/>
</dbReference>
<dbReference type="InterPro" id="IPR052063">
    <property type="entry name" value="Polysaccharide_Lyase_1"/>
</dbReference>
<dbReference type="PANTHER" id="PTHR42970">
    <property type="entry name" value="PECTATE LYASE C-RELATED"/>
    <property type="match status" value="1"/>
</dbReference>
<dbReference type="PANTHER" id="PTHR42970:SF1">
    <property type="entry name" value="PECTATE LYASE C-RELATED"/>
    <property type="match status" value="1"/>
</dbReference>
<dbReference type="Pfam" id="PF18884">
    <property type="entry name" value="TSP3_bac"/>
    <property type="match status" value="1"/>
</dbReference>
<dbReference type="SUPFAM" id="SSF51126">
    <property type="entry name" value="Pectin lyase-like"/>
    <property type="match status" value="1"/>
</dbReference>
<dbReference type="PROSITE" id="PS00018">
    <property type="entry name" value="EF_HAND_1"/>
    <property type="match status" value="1"/>
</dbReference>
<name>PLYC_ASPFN</name>
<organism>
    <name type="scientific">Aspergillus flavus (strain ATCC 200026 / FGSC A1120 / IAM 13836 / NRRL 3357 / JCM 12722 / SRRC 167)</name>
    <dbReference type="NCBI Taxonomy" id="332952"/>
    <lineage>
        <taxon>Eukaryota</taxon>
        <taxon>Fungi</taxon>
        <taxon>Dikarya</taxon>
        <taxon>Ascomycota</taxon>
        <taxon>Pezizomycotina</taxon>
        <taxon>Eurotiomycetes</taxon>
        <taxon>Eurotiomycetidae</taxon>
        <taxon>Eurotiales</taxon>
        <taxon>Aspergillaceae</taxon>
        <taxon>Aspergillus</taxon>
        <taxon>Aspergillus subgen. Circumdati</taxon>
    </lineage>
</organism>
<gene>
    <name type="primary">plyC</name>
    <name type="ORF">AFLA_002010</name>
</gene>
<reference key="1">
    <citation type="journal article" date="2015" name="Genome Announc.">
        <title>Genome sequence of Aspergillus flavus NRRL 3357, a strain that causes aflatoxin contamination of food and feed.</title>
        <authorList>
            <person name="Nierman W.C."/>
            <person name="Yu J."/>
            <person name="Fedorova-Abrams N.D."/>
            <person name="Losada L."/>
            <person name="Cleveland T.E."/>
            <person name="Bhatnagar D."/>
            <person name="Bennett J.W."/>
            <person name="Dean R."/>
            <person name="Payne G.A."/>
        </authorList>
    </citation>
    <scope>NUCLEOTIDE SEQUENCE [LARGE SCALE GENOMIC DNA]</scope>
    <source>
        <strain>ATCC 200026 / FGSC A1120 / IAM 13836 / NRRL 3357 / JCM 12722 / SRRC 167</strain>
    </source>
</reference>